<feature type="chain" id="PRO_0000318855" description="Zinc finger protein 716">
    <location>
        <begin position="1"/>
        <end position="495"/>
    </location>
</feature>
<feature type="domain" description="KRAB" evidence="2">
    <location>
        <begin position="16"/>
        <end position="87"/>
    </location>
</feature>
<feature type="zinc finger region" description="C2H2-type 1; degenerate" evidence="1">
    <location>
        <begin position="157"/>
        <end position="179"/>
    </location>
</feature>
<feature type="zinc finger region" description="C2H2-type 2; degenerate" evidence="1">
    <location>
        <begin position="185"/>
        <end position="207"/>
    </location>
</feature>
<feature type="zinc finger region" description="C2H2-type 3" evidence="1">
    <location>
        <begin position="213"/>
        <end position="235"/>
    </location>
</feature>
<feature type="zinc finger region" description="C2H2-type 4" evidence="1">
    <location>
        <begin position="241"/>
        <end position="263"/>
    </location>
</feature>
<feature type="zinc finger region" description="C2H2-type 5; degenerate" evidence="1">
    <location>
        <begin position="269"/>
        <end position="290"/>
    </location>
</feature>
<feature type="zinc finger region" description="C2H2-type 6" evidence="1">
    <location>
        <begin position="296"/>
        <end position="318"/>
    </location>
</feature>
<feature type="zinc finger region" description="C2H2-type 7" evidence="1">
    <location>
        <begin position="324"/>
        <end position="346"/>
    </location>
</feature>
<feature type="zinc finger region" description="C2H2-type 8" evidence="1">
    <location>
        <begin position="352"/>
        <end position="374"/>
    </location>
</feature>
<feature type="zinc finger region" description="C2H2-type 9" evidence="1">
    <location>
        <begin position="380"/>
        <end position="402"/>
    </location>
</feature>
<feature type="zinc finger region" description="C2H2-type 10" evidence="1">
    <location>
        <begin position="408"/>
        <end position="430"/>
    </location>
</feature>
<feature type="zinc finger region" description="C2H2-type 11" evidence="1">
    <location>
        <begin position="436"/>
        <end position="458"/>
    </location>
</feature>
<feature type="zinc finger region" description="C2H2-type 12" evidence="1">
    <location>
        <begin position="464"/>
        <end position="486"/>
    </location>
</feature>
<reference key="1">
    <citation type="journal article" date="2004" name="Nat. Genet.">
        <title>Complete sequencing and characterization of 21,243 full-length human cDNAs.</title>
        <authorList>
            <person name="Ota T."/>
            <person name="Suzuki Y."/>
            <person name="Nishikawa T."/>
            <person name="Otsuki T."/>
            <person name="Sugiyama T."/>
            <person name="Irie R."/>
            <person name="Wakamatsu A."/>
            <person name="Hayashi K."/>
            <person name="Sato H."/>
            <person name="Nagai K."/>
            <person name="Kimura K."/>
            <person name="Makita H."/>
            <person name="Sekine M."/>
            <person name="Obayashi M."/>
            <person name="Nishi T."/>
            <person name="Shibahara T."/>
            <person name="Tanaka T."/>
            <person name="Ishii S."/>
            <person name="Yamamoto J."/>
            <person name="Saito K."/>
            <person name="Kawai Y."/>
            <person name="Isono Y."/>
            <person name="Nakamura Y."/>
            <person name="Nagahari K."/>
            <person name="Murakami K."/>
            <person name="Yasuda T."/>
            <person name="Iwayanagi T."/>
            <person name="Wagatsuma M."/>
            <person name="Shiratori A."/>
            <person name="Sudo H."/>
            <person name="Hosoiri T."/>
            <person name="Kaku Y."/>
            <person name="Kodaira H."/>
            <person name="Kondo H."/>
            <person name="Sugawara M."/>
            <person name="Takahashi M."/>
            <person name="Kanda K."/>
            <person name="Yokoi T."/>
            <person name="Furuya T."/>
            <person name="Kikkawa E."/>
            <person name="Omura Y."/>
            <person name="Abe K."/>
            <person name="Kamihara K."/>
            <person name="Katsuta N."/>
            <person name="Sato K."/>
            <person name="Tanikawa M."/>
            <person name="Yamazaki M."/>
            <person name="Ninomiya K."/>
            <person name="Ishibashi T."/>
            <person name="Yamashita H."/>
            <person name="Murakawa K."/>
            <person name="Fujimori K."/>
            <person name="Tanai H."/>
            <person name="Kimata M."/>
            <person name="Watanabe M."/>
            <person name="Hiraoka S."/>
            <person name="Chiba Y."/>
            <person name="Ishida S."/>
            <person name="Ono Y."/>
            <person name="Takiguchi S."/>
            <person name="Watanabe S."/>
            <person name="Yosida M."/>
            <person name="Hotuta T."/>
            <person name="Kusano J."/>
            <person name="Kanehori K."/>
            <person name="Takahashi-Fujii A."/>
            <person name="Hara H."/>
            <person name="Tanase T.-O."/>
            <person name="Nomura Y."/>
            <person name="Togiya S."/>
            <person name="Komai F."/>
            <person name="Hara R."/>
            <person name="Takeuchi K."/>
            <person name="Arita M."/>
            <person name="Imose N."/>
            <person name="Musashino K."/>
            <person name="Yuuki H."/>
            <person name="Oshima A."/>
            <person name="Sasaki N."/>
            <person name="Aotsuka S."/>
            <person name="Yoshikawa Y."/>
            <person name="Matsunawa H."/>
            <person name="Ichihara T."/>
            <person name="Shiohata N."/>
            <person name="Sano S."/>
            <person name="Moriya S."/>
            <person name="Momiyama H."/>
            <person name="Satoh N."/>
            <person name="Takami S."/>
            <person name="Terashima Y."/>
            <person name="Suzuki O."/>
            <person name="Nakagawa S."/>
            <person name="Senoh A."/>
            <person name="Mizoguchi H."/>
            <person name="Goto Y."/>
            <person name="Shimizu F."/>
            <person name="Wakebe H."/>
            <person name="Hishigaki H."/>
            <person name="Watanabe T."/>
            <person name="Sugiyama A."/>
            <person name="Takemoto M."/>
            <person name="Kawakami B."/>
            <person name="Yamazaki M."/>
            <person name="Watanabe K."/>
            <person name="Kumagai A."/>
            <person name="Itakura S."/>
            <person name="Fukuzumi Y."/>
            <person name="Fujimori Y."/>
            <person name="Komiyama M."/>
            <person name="Tashiro H."/>
            <person name="Tanigami A."/>
            <person name="Fujiwara T."/>
            <person name="Ono T."/>
            <person name="Yamada K."/>
            <person name="Fujii Y."/>
            <person name="Ozaki K."/>
            <person name="Hirao M."/>
            <person name="Ohmori Y."/>
            <person name="Kawabata A."/>
            <person name="Hikiji T."/>
            <person name="Kobatake N."/>
            <person name="Inagaki H."/>
            <person name="Ikema Y."/>
            <person name="Okamoto S."/>
            <person name="Okitani R."/>
            <person name="Kawakami T."/>
            <person name="Noguchi S."/>
            <person name="Itoh T."/>
            <person name="Shigeta K."/>
            <person name="Senba T."/>
            <person name="Matsumura K."/>
            <person name="Nakajima Y."/>
            <person name="Mizuno T."/>
            <person name="Morinaga M."/>
            <person name="Sasaki M."/>
            <person name="Togashi T."/>
            <person name="Oyama M."/>
            <person name="Hata H."/>
            <person name="Watanabe M."/>
            <person name="Komatsu T."/>
            <person name="Mizushima-Sugano J."/>
            <person name="Satoh T."/>
            <person name="Shirai Y."/>
            <person name="Takahashi Y."/>
            <person name="Nakagawa K."/>
            <person name="Okumura K."/>
            <person name="Nagase T."/>
            <person name="Nomura N."/>
            <person name="Kikuchi H."/>
            <person name="Masuho Y."/>
            <person name="Yamashita R."/>
            <person name="Nakai K."/>
            <person name="Yada T."/>
            <person name="Nakamura Y."/>
            <person name="Ohara O."/>
            <person name="Isogai T."/>
            <person name="Sugano S."/>
        </authorList>
    </citation>
    <scope>NUCLEOTIDE SEQUENCE [LARGE SCALE MRNA]</scope>
    <source>
        <tissue>Testis</tissue>
    </source>
</reference>
<reference key="2">
    <citation type="journal article" date="2003" name="Nature">
        <title>The DNA sequence of human chromosome 7.</title>
        <authorList>
            <person name="Hillier L.W."/>
            <person name="Fulton R.S."/>
            <person name="Fulton L.A."/>
            <person name="Graves T.A."/>
            <person name="Pepin K.H."/>
            <person name="Wagner-McPherson C."/>
            <person name="Layman D."/>
            <person name="Maas J."/>
            <person name="Jaeger S."/>
            <person name="Walker R."/>
            <person name="Wylie K."/>
            <person name="Sekhon M."/>
            <person name="Becker M.C."/>
            <person name="O'Laughlin M.D."/>
            <person name="Schaller M.E."/>
            <person name="Fewell G.A."/>
            <person name="Delehaunty K.D."/>
            <person name="Miner T.L."/>
            <person name="Nash W.E."/>
            <person name="Cordes M."/>
            <person name="Du H."/>
            <person name="Sun H."/>
            <person name="Edwards J."/>
            <person name="Bradshaw-Cordum H."/>
            <person name="Ali J."/>
            <person name="Andrews S."/>
            <person name="Isak A."/>
            <person name="Vanbrunt A."/>
            <person name="Nguyen C."/>
            <person name="Du F."/>
            <person name="Lamar B."/>
            <person name="Courtney L."/>
            <person name="Kalicki J."/>
            <person name="Ozersky P."/>
            <person name="Bielicki L."/>
            <person name="Scott K."/>
            <person name="Holmes A."/>
            <person name="Harkins R."/>
            <person name="Harris A."/>
            <person name="Strong C.M."/>
            <person name="Hou S."/>
            <person name="Tomlinson C."/>
            <person name="Dauphin-Kohlberg S."/>
            <person name="Kozlowicz-Reilly A."/>
            <person name="Leonard S."/>
            <person name="Rohlfing T."/>
            <person name="Rock S.M."/>
            <person name="Tin-Wollam A.-M."/>
            <person name="Abbott A."/>
            <person name="Minx P."/>
            <person name="Maupin R."/>
            <person name="Strowmatt C."/>
            <person name="Latreille P."/>
            <person name="Miller N."/>
            <person name="Johnson D."/>
            <person name="Murray J."/>
            <person name="Woessner J.P."/>
            <person name="Wendl M.C."/>
            <person name="Yang S.-P."/>
            <person name="Schultz B.R."/>
            <person name="Wallis J.W."/>
            <person name="Spieth J."/>
            <person name="Bieri T.A."/>
            <person name="Nelson J.O."/>
            <person name="Berkowicz N."/>
            <person name="Wohldmann P.E."/>
            <person name="Cook L.L."/>
            <person name="Hickenbotham M.T."/>
            <person name="Eldred J."/>
            <person name="Williams D."/>
            <person name="Bedell J.A."/>
            <person name="Mardis E.R."/>
            <person name="Clifton S.W."/>
            <person name="Chissoe S.L."/>
            <person name="Marra M.A."/>
            <person name="Raymond C."/>
            <person name="Haugen E."/>
            <person name="Gillett W."/>
            <person name="Zhou Y."/>
            <person name="James R."/>
            <person name="Phelps K."/>
            <person name="Iadanoto S."/>
            <person name="Bubb K."/>
            <person name="Simms E."/>
            <person name="Levy R."/>
            <person name="Clendenning J."/>
            <person name="Kaul R."/>
            <person name="Kent W.J."/>
            <person name="Furey T.S."/>
            <person name="Baertsch R.A."/>
            <person name="Brent M.R."/>
            <person name="Keibler E."/>
            <person name="Flicek P."/>
            <person name="Bork P."/>
            <person name="Suyama M."/>
            <person name="Bailey J.A."/>
            <person name="Portnoy M.E."/>
            <person name="Torrents D."/>
            <person name="Chinwalla A.T."/>
            <person name="Gish W.R."/>
            <person name="Eddy S.R."/>
            <person name="McPherson J.D."/>
            <person name="Olson M.V."/>
            <person name="Eichler E.E."/>
            <person name="Green E.D."/>
            <person name="Waterston R.H."/>
            <person name="Wilson R.K."/>
        </authorList>
    </citation>
    <scope>NUCLEOTIDE SEQUENCE [LARGE SCALE GENOMIC DNA]</scope>
</reference>
<protein>
    <recommendedName>
        <fullName>Zinc finger protein 716</fullName>
    </recommendedName>
</protein>
<name>ZN716_HUMAN</name>
<comment type="function">
    <text>May be involved in transcriptional regulation.</text>
</comment>
<comment type="subcellular location">
    <subcellularLocation>
        <location evidence="3">Nucleus</location>
    </subcellularLocation>
</comment>
<comment type="similarity">
    <text evidence="3">Belongs to the krueppel C2H2-type zinc-finger protein family.</text>
</comment>
<keyword id="KW-0238">DNA-binding</keyword>
<keyword id="KW-0479">Metal-binding</keyword>
<keyword id="KW-0539">Nucleus</keyword>
<keyword id="KW-1267">Proteomics identification</keyword>
<keyword id="KW-1185">Reference proteome</keyword>
<keyword id="KW-0677">Repeat</keyword>
<keyword id="KW-0804">Transcription</keyword>
<keyword id="KW-0805">Transcription regulation</keyword>
<keyword id="KW-0862">Zinc</keyword>
<keyword id="KW-0863">Zinc-finger</keyword>
<accession>A6NP11</accession>
<proteinExistence type="evidence at protein level"/>
<evidence type="ECO:0000255" key="1">
    <source>
        <dbReference type="PROSITE-ProRule" id="PRU00042"/>
    </source>
</evidence>
<evidence type="ECO:0000255" key="2">
    <source>
        <dbReference type="PROSITE-ProRule" id="PRU00119"/>
    </source>
</evidence>
<evidence type="ECO:0000305" key="3"/>
<gene>
    <name type="primary">ZNF716</name>
</gene>
<sequence length="495" mass="57006">MAKRPGPPGSREMGLLTFRDIAIEFSLAEWQCLDHAQQNLYRDVMLENYRNLVSLGIAVSKPDLITCLEQNKEPQNIKRNEMVAKHPVTCSHFTQDLQSEQGIKDSLQKVILRRYGKCGQEDLQVKKCCKSVGECEVHKGGYNYVNQCLSATQNKTFQTHKCVKVFGKFSNSNRHKTRHTGKKHFKCKNDGKSFCMLSRLNQHQIIHTREKSYKCEECGKSFNCSSTLTRHKRIHTGEKPYRCEECGKAFSWSASLTKHKRIHTGEKPYTCEERGKVFSRSTLTNYKRIHTGEKPYTCEECGKAFSRSSTLTNHKRIHTGERPYKCEECGKAFSLSSTLKKHKIVHTGEKLYTCEECGKAFTFSSTLNTHKRIHTGEKPYTCEECGKAFSLPSTFTYHKRTHTGEKPYKCEECGKAFNCSSTLKKHKIIHTGEKLYKCKECGKAFTFSSTLNTHKRIHTGEKPYKCEECDQTFKWHSSLANHKNMHTGEKPYKYE</sequence>
<organism>
    <name type="scientific">Homo sapiens</name>
    <name type="common">Human</name>
    <dbReference type="NCBI Taxonomy" id="9606"/>
    <lineage>
        <taxon>Eukaryota</taxon>
        <taxon>Metazoa</taxon>
        <taxon>Chordata</taxon>
        <taxon>Craniata</taxon>
        <taxon>Vertebrata</taxon>
        <taxon>Euteleostomi</taxon>
        <taxon>Mammalia</taxon>
        <taxon>Eutheria</taxon>
        <taxon>Euarchontoglires</taxon>
        <taxon>Primates</taxon>
        <taxon>Haplorrhini</taxon>
        <taxon>Catarrhini</taxon>
        <taxon>Hominidae</taxon>
        <taxon>Homo</taxon>
    </lineage>
</organism>
<dbReference type="EMBL" id="AK131575">
    <property type="status" value="NOT_ANNOTATED_CDS"/>
    <property type="molecule type" value="mRNA"/>
</dbReference>
<dbReference type="EMBL" id="AC092175">
    <property type="status" value="NOT_ANNOTATED_CDS"/>
    <property type="molecule type" value="Genomic_DNA"/>
</dbReference>
<dbReference type="CCDS" id="CCDS55112.1"/>
<dbReference type="RefSeq" id="NP_001152751.1">
    <property type="nucleotide sequence ID" value="NM_001159279.1"/>
</dbReference>
<dbReference type="SMR" id="A6NP11"/>
<dbReference type="BioGRID" id="137285">
    <property type="interactions" value="4"/>
</dbReference>
<dbReference type="IntAct" id="A6NP11">
    <property type="interactions" value="1"/>
</dbReference>
<dbReference type="STRING" id="9606.ENSP00000394248"/>
<dbReference type="iPTMnet" id="A6NP11"/>
<dbReference type="PhosphoSitePlus" id="A6NP11"/>
<dbReference type="BioMuta" id="ZNF716"/>
<dbReference type="jPOST" id="A6NP11"/>
<dbReference type="MassIVE" id="A6NP11"/>
<dbReference type="PaxDb" id="9606-ENSP00000394248"/>
<dbReference type="PeptideAtlas" id="A6NP11"/>
<dbReference type="ProteomicsDB" id="1652"/>
<dbReference type="DNASU" id="441234"/>
<dbReference type="Ensembl" id="ENST00000420713.2">
    <property type="protein sequence ID" value="ENSP00000394248.1"/>
    <property type="gene ID" value="ENSG00000182111.9"/>
</dbReference>
<dbReference type="GeneID" id="441234"/>
<dbReference type="KEGG" id="hsa:441234"/>
<dbReference type="MANE-Select" id="ENST00000420713.2">
    <property type="protein sequence ID" value="ENSP00000394248.1"/>
    <property type="RefSeq nucleotide sequence ID" value="NM_001159279.1"/>
    <property type="RefSeq protein sequence ID" value="NP_001152751.1"/>
</dbReference>
<dbReference type="UCSC" id="uc011kdi.2">
    <property type="organism name" value="human"/>
</dbReference>
<dbReference type="AGR" id="HGNC:32458"/>
<dbReference type="CTD" id="441234"/>
<dbReference type="DisGeNET" id="441234"/>
<dbReference type="GeneCards" id="ZNF716"/>
<dbReference type="HGNC" id="HGNC:32458">
    <property type="gene designation" value="ZNF716"/>
</dbReference>
<dbReference type="HPA" id="ENSG00000182111">
    <property type="expression patterns" value="Not detected"/>
</dbReference>
<dbReference type="neXtProt" id="NX_A6NP11"/>
<dbReference type="OpenTargets" id="ENSG00000182111"/>
<dbReference type="VEuPathDB" id="HostDB:ENSG00000182111"/>
<dbReference type="eggNOG" id="KOG1721">
    <property type="taxonomic scope" value="Eukaryota"/>
</dbReference>
<dbReference type="GeneTree" id="ENSGT00940000153236"/>
<dbReference type="HOGENOM" id="CLU_002678_44_17_1"/>
<dbReference type="InParanoid" id="A6NP11"/>
<dbReference type="OMA" id="VKKCCKS"/>
<dbReference type="OrthoDB" id="6591996at2759"/>
<dbReference type="PAN-GO" id="A6NP11">
    <property type="GO annotations" value="3 GO annotations based on evolutionary models"/>
</dbReference>
<dbReference type="PhylomeDB" id="A6NP11"/>
<dbReference type="TreeFam" id="TF342117"/>
<dbReference type="PathwayCommons" id="A6NP11"/>
<dbReference type="Reactome" id="R-HSA-212436">
    <property type="pathway name" value="Generic Transcription Pathway"/>
</dbReference>
<dbReference type="SignaLink" id="A6NP11"/>
<dbReference type="BioGRID-ORCS" id="441234">
    <property type="hits" value="8 hits in 1070 CRISPR screens"/>
</dbReference>
<dbReference type="GenomeRNAi" id="441234"/>
<dbReference type="Pharos" id="A6NP11">
    <property type="development level" value="Tdark"/>
</dbReference>
<dbReference type="PRO" id="PR:A6NP11"/>
<dbReference type="Proteomes" id="UP000005640">
    <property type="component" value="Chromosome 7"/>
</dbReference>
<dbReference type="RNAct" id="A6NP11">
    <property type="molecule type" value="protein"/>
</dbReference>
<dbReference type="Bgee" id="ENSG00000182111">
    <property type="expression patterns" value="Expressed in primordial germ cell in gonad and 2 other cell types or tissues"/>
</dbReference>
<dbReference type="GO" id="GO:0005634">
    <property type="term" value="C:nucleus"/>
    <property type="evidence" value="ECO:0007669"/>
    <property type="project" value="UniProtKB-SubCell"/>
</dbReference>
<dbReference type="GO" id="GO:0000981">
    <property type="term" value="F:DNA-binding transcription factor activity, RNA polymerase II-specific"/>
    <property type="evidence" value="ECO:0000318"/>
    <property type="project" value="GO_Central"/>
</dbReference>
<dbReference type="GO" id="GO:0000978">
    <property type="term" value="F:RNA polymerase II cis-regulatory region sequence-specific DNA binding"/>
    <property type="evidence" value="ECO:0000318"/>
    <property type="project" value="GO_Central"/>
</dbReference>
<dbReference type="GO" id="GO:0008270">
    <property type="term" value="F:zinc ion binding"/>
    <property type="evidence" value="ECO:0007669"/>
    <property type="project" value="UniProtKB-KW"/>
</dbReference>
<dbReference type="GO" id="GO:0006355">
    <property type="term" value="P:regulation of DNA-templated transcription"/>
    <property type="evidence" value="ECO:0000318"/>
    <property type="project" value="GO_Central"/>
</dbReference>
<dbReference type="CDD" id="cd07765">
    <property type="entry name" value="KRAB_A-box"/>
    <property type="match status" value="1"/>
</dbReference>
<dbReference type="FunFam" id="3.30.160.60:FF:000374">
    <property type="entry name" value="Zinc finger protein 208"/>
    <property type="match status" value="1"/>
</dbReference>
<dbReference type="FunFam" id="3.30.160.60:FF:000034">
    <property type="entry name" value="zinc finger protein 25"/>
    <property type="match status" value="3"/>
</dbReference>
<dbReference type="FunFam" id="3.30.160.60:FF:001408">
    <property type="entry name" value="Zinc finger protein 260"/>
    <property type="match status" value="1"/>
</dbReference>
<dbReference type="FunFam" id="3.30.160.60:FF:002343">
    <property type="entry name" value="Zinc finger protein 33A"/>
    <property type="match status" value="1"/>
</dbReference>
<dbReference type="FunFam" id="3.30.160.60:FF:000016">
    <property type="entry name" value="zinc finger protein 37 homolog"/>
    <property type="match status" value="1"/>
</dbReference>
<dbReference type="FunFam" id="3.30.160.60:FF:000362">
    <property type="entry name" value="Zinc finger protein 606"/>
    <property type="match status" value="2"/>
</dbReference>
<dbReference type="FunFam" id="3.30.160.60:FF:002811">
    <property type="entry name" value="Zinc finger protein 679"/>
    <property type="match status" value="1"/>
</dbReference>
<dbReference type="Gene3D" id="6.10.140.140">
    <property type="match status" value="1"/>
</dbReference>
<dbReference type="Gene3D" id="3.30.160.60">
    <property type="entry name" value="Classic Zinc Finger"/>
    <property type="match status" value="11"/>
</dbReference>
<dbReference type="InterPro" id="IPR001909">
    <property type="entry name" value="KRAB"/>
</dbReference>
<dbReference type="InterPro" id="IPR036051">
    <property type="entry name" value="KRAB_dom_sf"/>
</dbReference>
<dbReference type="InterPro" id="IPR050826">
    <property type="entry name" value="Krueppel_C2H2_ZnFinger"/>
</dbReference>
<dbReference type="InterPro" id="IPR036236">
    <property type="entry name" value="Znf_C2H2_sf"/>
</dbReference>
<dbReference type="InterPro" id="IPR013087">
    <property type="entry name" value="Znf_C2H2_type"/>
</dbReference>
<dbReference type="PANTHER" id="PTHR24377">
    <property type="entry name" value="IP01015P-RELATED"/>
    <property type="match status" value="1"/>
</dbReference>
<dbReference type="Pfam" id="PF01352">
    <property type="entry name" value="KRAB"/>
    <property type="match status" value="1"/>
</dbReference>
<dbReference type="Pfam" id="PF00096">
    <property type="entry name" value="zf-C2H2"/>
    <property type="match status" value="9"/>
</dbReference>
<dbReference type="SMART" id="SM00349">
    <property type="entry name" value="KRAB"/>
    <property type="match status" value="1"/>
</dbReference>
<dbReference type="SMART" id="SM00355">
    <property type="entry name" value="ZnF_C2H2"/>
    <property type="match status" value="10"/>
</dbReference>
<dbReference type="SUPFAM" id="SSF57667">
    <property type="entry name" value="beta-beta-alpha zinc fingers"/>
    <property type="match status" value="6"/>
</dbReference>
<dbReference type="SUPFAM" id="SSF109640">
    <property type="entry name" value="KRAB domain (Kruppel-associated box)"/>
    <property type="match status" value="1"/>
</dbReference>
<dbReference type="PROSITE" id="PS50805">
    <property type="entry name" value="KRAB"/>
    <property type="match status" value="1"/>
</dbReference>
<dbReference type="PROSITE" id="PS00028">
    <property type="entry name" value="ZINC_FINGER_C2H2_1"/>
    <property type="match status" value="9"/>
</dbReference>
<dbReference type="PROSITE" id="PS50157">
    <property type="entry name" value="ZINC_FINGER_C2H2_2"/>
    <property type="match status" value="12"/>
</dbReference>